<evidence type="ECO:0000256" key="1">
    <source>
        <dbReference type="SAM" id="MobiDB-lite"/>
    </source>
</evidence>
<evidence type="ECO:0000269" key="2">
    <source>
    </source>
</evidence>
<evidence type="ECO:0000269" key="3">
    <source>
    </source>
</evidence>
<evidence type="ECO:0000303" key="4">
    <source>
    </source>
</evidence>
<evidence type="ECO:0000303" key="5">
    <source>
    </source>
</evidence>
<gene>
    <name type="primary">popA</name>
    <name type="ordered locus">RSp0877</name>
    <name type="ORF">RS01648</name>
</gene>
<organism>
    <name type="scientific">Ralstonia nicotianae (strain ATCC BAA-1114 / GMI1000)</name>
    <name type="common">Ralstonia solanacearum</name>
    <dbReference type="NCBI Taxonomy" id="267608"/>
    <lineage>
        <taxon>Bacteria</taxon>
        <taxon>Pseudomonadati</taxon>
        <taxon>Pseudomonadota</taxon>
        <taxon>Betaproteobacteria</taxon>
        <taxon>Burkholderiales</taxon>
        <taxon>Burkholderiaceae</taxon>
        <taxon>Ralstonia</taxon>
        <taxon>Ralstonia solanacearum species complex</taxon>
    </lineage>
</organism>
<comment type="function">
    <text evidence="3">Acts as a specific hypersensitive response (HR) elicitor. Has activity on tobacco (non-host plant) and petunia but is without activity on tomato (host plant); PopA3 seems to be more active than a PopA1-PopA2 mixture.</text>
</comment>
<comment type="subcellular location">
    <subcellularLocation>
        <location evidence="2 3">Secreted</location>
    </subcellularLocation>
    <text evidence="2 3">Probably secreted via a type III secretion system (T3SS).</text>
</comment>
<comment type="PTM">
    <text evidence="3">PopA2 and PopA3 are produced from PopA1.</text>
</comment>
<comment type="mass spectrometry" mass="33033.2" error="5.2" method="Electrospray" evidence="3">
    <molecule>Protein PopA1</molecule>
    <text>Mass of PopA1.</text>
</comment>
<comment type="mass spectrometry" mass="23540.2" error="7.9" method="Electrospray" evidence="3">
    <molecule>Protein PopA3</molecule>
    <text>Mass of PopA3.</text>
</comment>
<comment type="disruption phenotype">
    <text evidence="3">Remains fully pathogenic on sensitive plants, suggesting the bacteria produces other pathogenicity factors.</text>
</comment>
<feature type="initiator methionine" description="Removed" evidence="3">
    <location>
        <position position="1"/>
    </location>
</feature>
<feature type="chain" id="PRO_0000022085" description="Protein PopA1" evidence="3">
    <location>
        <begin position="2"/>
        <end position="344"/>
    </location>
</feature>
<feature type="chain" id="PRO_0000022086" description="Protein PopA2" evidence="5">
    <location>
        <begin position="10"/>
        <end position="344"/>
    </location>
</feature>
<feature type="chain" id="PRO_0000022087" description="Protein PopA3" evidence="3">
    <location>
        <begin position="96"/>
        <end position="344"/>
    </location>
</feature>
<feature type="region of interest" description="Disordered" evidence="1">
    <location>
        <begin position="1"/>
        <end position="28"/>
    </location>
</feature>
<feature type="region of interest" description="Disordered" evidence="1">
    <location>
        <begin position="58"/>
        <end position="108"/>
    </location>
</feature>
<feature type="region of interest" description="Disordered" evidence="1">
    <location>
        <begin position="134"/>
        <end position="156"/>
    </location>
</feature>
<feature type="region of interest" description="Disordered" evidence="1">
    <location>
        <begin position="211"/>
        <end position="242"/>
    </location>
</feature>
<feature type="region of interest" description="Disordered" evidence="1">
    <location>
        <begin position="268"/>
        <end position="311"/>
    </location>
</feature>
<feature type="compositionally biased region" description="Low complexity" evidence="1">
    <location>
        <begin position="8"/>
        <end position="28"/>
    </location>
</feature>
<feature type="compositionally biased region" description="Low complexity" evidence="1">
    <location>
        <begin position="65"/>
        <end position="83"/>
    </location>
</feature>
<feature type="compositionally biased region" description="Polar residues" evidence="1">
    <location>
        <begin position="89"/>
        <end position="108"/>
    </location>
</feature>
<feature type="compositionally biased region" description="Gly residues" evidence="1">
    <location>
        <begin position="138"/>
        <end position="156"/>
    </location>
</feature>
<feature type="compositionally biased region" description="Low complexity" evidence="1">
    <location>
        <begin position="215"/>
        <end position="235"/>
    </location>
</feature>
<feature type="compositionally biased region" description="Gly residues" evidence="1">
    <location>
        <begin position="268"/>
        <end position="279"/>
    </location>
</feature>
<feature type="compositionally biased region" description="Low complexity" evidence="1">
    <location>
        <begin position="280"/>
        <end position="294"/>
    </location>
</feature>
<feature type="compositionally biased region" description="Polar residues" evidence="1">
    <location>
        <begin position="295"/>
        <end position="311"/>
    </location>
</feature>
<feature type="sequence variant" description="In strain: OE1-1.">
    <location>
        <begin position="24"/>
        <end position="25"/>
    </location>
</feature>
<feature type="sequence variant" description="In strain: 8107.">
    <original>ANDPSK</original>
    <variation>GA</variation>
    <location>
        <begin position="80"/>
        <end position="85"/>
    </location>
</feature>
<feature type="sequence variant" description="In strain: OE1-1.">
    <original>L</original>
    <variation>P</variation>
    <location>
        <position position="173"/>
    </location>
</feature>
<feature type="sequence variant" description="In strain: 8107 and OE1-1.">
    <original>G</original>
    <variation>A</variation>
    <location>
        <position position="177"/>
    </location>
</feature>
<feature type="sequence variant" description="In strain: 8107.">
    <location>
        <begin position="187"/>
        <end position="196"/>
    </location>
</feature>
<feature type="sequence variant" description="In strain: OE1-1.">
    <location>
        <begin position="193"/>
        <end position="195"/>
    </location>
</feature>
<feature type="sequence variant" description="In strain: OE1-1.">
    <original>N</original>
    <variation>I</variation>
    <location>
        <position position="229"/>
    </location>
</feature>
<feature type="sequence variant" description="In strain: 8107.">
    <original>G</original>
    <variation>A</variation>
    <location>
        <position position="269"/>
    </location>
</feature>
<feature type="sequence variant" description="In strain: OE1-1.">
    <original>G</original>
    <variation>D</variation>
    <location>
        <position position="305"/>
    </location>
</feature>
<feature type="sequence variant" description="In strain: OE1-1.">
    <original>A</original>
    <variation>E</variation>
    <location>
        <position position="329"/>
    </location>
</feature>
<dbReference type="EMBL" id="AJ245811">
    <property type="protein sequence ID" value="CAB58262.1"/>
    <property type="molecule type" value="Genomic_DNA"/>
</dbReference>
<dbReference type="EMBL" id="AL646053">
    <property type="protein sequence ID" value="CAD18028.1"/>
    <property type="molecule type" value="Genomic_DNA"/>
</dbReference>
<dbReference type="EMBL" id="AB026629">
    <property type="protein sequence ID" value="BAA77270.1"/>
    <property type="molecule type" value="Genomic_DNA"/>
</dbReference>
<dbReference type="EMBL" id="AB032747">
    <property type="protein sequence ID" value="BAA84679.1"/>
    <property type="molecule type" value="Genomic_DNA"/>
</dbReference>
<dbReference type="RefSeq" id="WP_011004174.1">
    <property type="nucleotide sequence ID" value="NC_003296.1"/>
</dbReference>
<dbReference type="EnsemblBacteria" id="CAD18028">
    <property type="protein sequence ID" value="CAD18028"/>
    <property type="gene ID" value="RSp0877"/>
</dbReference>
<dbReference type="KEGG" id="rso:RSp0877"/>
<dbReference type="PATRIC" id="fig|267608.8.peg.4347"/>
<dbReference type="HOGENOM" id="CLU_806250_0_0_4"/>
<dbReference type="PHI-base" id="PHI:5145"/>
<dbReference type="Proteomes" id="UP000001436">
    <property type="component" value="Plasmid megaplasmid Rsp"/>
</dbReference>
<dbReference type="GO" id="GO:0005576">
    <property type="term" value="C:extracellular region"/>
    <property type="evidence" value="ECO:0000314"/>
    <property type="project" value="UniProtKB"/>
</dbReference>
<dbReference type="GO" id="GO:0052040">
    <property type="term" value="P:symbiont-mediated perturbation of host programmed cell death"/>
    <property type="evidence" value="ECO:0000314"/>
    <property type="project" value="UniProtKB"/>
</dbReference>
<keyword id="KW-0903">Direct protein sequencing</keyword>
<keyword id="KW-0928">Hypersensitive response elicitation</keyword>
<keyword id="KW-0614">Plasmid</keyword>
<keyword id="KW-1185">Reference proteome</keyword>
<keyword id="KW-0964">Secreted</keyword>
<geneLocation type="plasmid">
    <name>megaplasmid Rsp</name>
</geneLocation>
<sequence length="344" mass="33152">MSVGNIQSPSNLPGLQNLNLNTNTNSQQSGQSVQDLIKQVEKDILNIIAALVQKAAQSAGGNTGNTGNAPAKDGNANAGANDPSKNDPSKSQGPQSANKTGNVDDANNQDPMQALMQLLEDLVKLLKAALHMQQPGGNDKGNGVGGANGAKGAGGQGGLAEALQEIEQILAQLGGGGAGAGGAGGGVGGAGGADGGSGAGGAGGANGADGGNGVNGNQANGPQNAGDVNGANGADDGSEDQGGLTGVLQKLMKILNALVQMMQQGGLGGGNQAQGGSKGAGNASPASGANPGANQPGSADDQSSGQNNLQSQIMDVVKEVVQILQQMLAAQNGGSQQSTSTQPM</sequence>
<reference key="1">
    <citation type="journal article" date="1994" name="EMBO J.">
        <title>PopA1, a protein which induces a hypersensitivity-like response on specific Petunia genotypes, is secreted via the Hrp pathway of Pseudomonas solanacearum.</title>
        <authorList>
            <person name="Arlat M."/>
            <person name="Van Gijsegem F."/>
            <person name="Huet J.-C."/>
            <person name="Pernollet J.-C."/>
            <person name="Boucher C.A."/>
        </authorList>
    </citation>
    <scope>NUCLEOTIDE SEQUENCE [GENOMIC DNA]</scope>
    <scope>PROTEIN SEQUENCE OF 2-21 AND 96-144</scope>
    <scope>SUBCELLULAR LOCATION</scope>
    <scope>MASS SPECTROMETRY</scope>
    <scope>DISRUPTION PHENOTYPE</scope>
    <source>
        <strain>ATCC BAA-1114 / GMI1000</strain>
    </source>
</reference>
<reference key="2">
    <citation type="journal article" date="2002" name="Nature">
        <title>Genome sequence of the plant pathogen Ralstonia solanacearum.</title>
        <authorList>
            <person name="Salanoubat M."/>
            <person name="Genin S."/>
            <person name="Artiguenave F."/>
            <person name="Gouzy J."/>
            <person name="Mangenot S."/>
            <person name="Arlat M."/>
            <person name="Billault A."/>
            <person name="Brottier P."/>
            <person name="Camus J.-C."/>
            <person name="Cattolico L."/>
            <person name="Chandler M."/>
            <person name="Choisne N."/>
            <person name="Claudel-Renard C."/>
            <person name="Cunnac S."/>
            <person name="Demange N."/>
            <person name="Gaspin C."/>
            <person name="Lavie M."/>
            <person name="Moisan A."/>
            <person name="Robert C."/>
            <person name="Saurin W."/>
            <person name="Schiex T."/>
            <person name="Siguier P."/>
            <person name="Thebault P."/>
            <person name="Whalen M."/>
            <person name="Wincker P."/>
            <person name="Levy M."/>
            <person name="Weissenbach J."/>
            <person name="Boucher C.A."/>
        </authorList>
    </citation>
    <scope>NUCLEOTIDE SEQUENCE [LARGE SCALE GENOMIC DNA]</scope>
    <source>
        <strain>ATCC BAA-1114 / GMI1000</strain>
    </source>
</reference>
<reference key="3">
    <citation type="submission" date="1999-04" db="EMBL/GenBank/DDBJ databases">
        <authorList>
            <person name="Hikichi Y."/>
            <person name="Ikegami M."/>
            <person name="Okuno T."/>
        </authorList>
    </citation>
    <scope>NUCLEOTIDE SEQUENCE [GENOMIC DNA]</scope>
    <source>
        <strain>8107</strain>
    </source>
</reference>
<reference key="4">
    <citation type="submission" date="1999-09" db="EMBL/GenBank/DDBJ databases">
        <title>popA in Ralstonia solanacearum OE1-1 pathogenic to tobacco.</title>
        <authorList>
            <person name="Hikich Y."/>
            <person name="Kanda A."/>
            <person name="Hasegawa H."/>
            <person name="Okuno T."/>
        </authorList>
    </citation>
    <scope>NUCLEOTIDE SEQUENCE [GENOMIC DNA]</scope>
    <source>
        <strain>OE1-1</strain>
    </source>
</reference>
<reference key="5">
    <citation type="journal article" date="1999" name="Proc. Natl. Acad. Sci. U.S.A.">
        <title>The Xanthomonas Hrp type III system secretes proteins from plant and mammalian bacterial pathogens.</title>
        <authorList>
            <person name="Rossier O."/>
            <person name="Wengelnik K."/>
            <person name="Hahn K."/>
            <person name="Bonas U."/>
        </authorList>
    </citation>
    <scope>SUBCELLULAR LOCATION</scope>
</reference>
<name>POPA_RALN1</name>
<accession>Q9RBS0</accession>
<accession>Q52544</accession>
<accession>Q9RBY0</accession>
<accession>Q9WXK0</accession>
<protein>
    <recommendedName>
        <fullName evidence="4">Protein PopA1</fullName>
    </recommendedName>
    <component>
        <recommendedName>
            <fullName evidence="4">Protein PopA2</fullName>
        </recommendedName>
    </component>
    <component>
        <recommendedName>
            <fullName evidence="4">Protein PopA3</fullName>
        </recommendedName>
    </component>
</protein>
<proteinExistence type="evidence at protein level"/>